<sequence>MDSTSFLPTFLDVDLTISHIKCLPKDILVKFQGIKSNECEFDYHVLQREIQHTPKVKNNVEIDEFCLVEERVSGEWQRGRVMEKKNELYTVLLIDRGEELRVAGPQIASACGNLFELPPRVVFGIFANILPVGEKWSPKALNYFKSLVGIQVKGYVQAILPLQMFLFEVPKIISQALELQLGRLVDGDSFRLIVEMLEEFPQQMPDLLQHKRPELSLGNKDTSLDIQHVLDKLQPSLSVGSTESVKVSSALSPSKFYCQLIKWTPELENLTAHMTLHYDTVCQETSPTCDNFGLLCVARRRNGQWHRGILQQLLPPNQVKIWFMDYGSSEAIPSIYVKKLKQDFILVPLFSFPCSLTCLHSPDRDARIFQLSIFKQALLGQVVYAHIDWFNKDECLYYVTLQTQESTVNSKCLLKTVGTQVLCPMSDSKISNILSETSVSDVNSFAVESFMGNIEWSIDSLNKKGILKVGFPIKTVQMEIEAAYIAFIAYVLNPSNFWVRTNDHRNEFQEIMKNINKFYDLCENDEMILRKPEPGLFCCARYSKDRRFYRAVITEINGYKINVYFLDYGNTDSIPFFDVKILLPEFCELPALAMCCSLAHIFPVEDLWTKAAIDYFKKLVLNKAILLQVIAKKDDKYTVNIQSVEASENIDVISLMLQAGYAEYFQVELEYFPKSVSEYSMLNSESKNKVNIKKVISALLEGPKSKKYHSNNLVENNLSLPKSLAVNISEFKNPFTLSVGPESSWPYKEYIFRPGTVLEVKCSCYYGPGDFSCQLQCKSEDLKLLMEQIQNYYSIHSDPYEIGQTACVAKYSGKWCRAAVLTQVSKEVDIVFVDYGYQKRVLIEDLCAINPRFLLLESQAFRCCLNHFIEPVSCKLFSWTRKAFRDLWNFISSSRGLLTCIIYALVIIHPNHLYNLVDLQSSFTSAKEFLMNRGSAQYITLSETFPSLFSLYSYCYSSFNIQIGSEEEVYISHIYSPQKFYCQLGRNNKDLEMIETKITESVNLQNFPKYDSNKMRVCISKYVEDGLSYRALAIPTDSSSEFQVYFVDFGNKQLVGENMLRAISAQFPELLFTPMQAIKCFLSDLRDVDIPAEISSWFKDNFLGRSLKAIILSQESDGQLGIELYDGSQYINEKIKVLLHAYGKRHCDQACCMEKSNKINENKRFTTSLKGKTGNNYRHNVINKPSPVTYSERKIDQLMHPKNIHARFLKPSVCYKMEPVSKNKMKTSLNDGLKGIKIVPGAAHILENRRVGQKSVKVVSQSFIRALNQTTSQNPYDLIRPQIKDLPQPQIYLNAKVKGYVSNISNPANFHIQLAENESVIIRLADALNATARRLRERKSVKPLVGDLVVAEYSGDNAIYRAVIKKILPGNSFEVEFIDYGNSAIVNTSKIYELQREFLTVPQLGIHAFLSGVKWNEPDEIWDDKTVDYFTSKVHNKTVYCEFLKKHDQKWEVNMICDEKCVINELLKWKACSKLQKSALQMPQVLSQKVRPGDNEMKKGKSNESEGSMNSNQQLFKIPLEEFKLGQLEKAEMLNVSKSGRFYVKLSKNKKILSDLIVLITKEEKKSPFLSMESIEKGLECLAKSKNTLKWHRSKVEEKYVDDKVLVFLVDCGIYEIVPVCNTKLLSNEIRNIPRQAVPCKWIWFENSKNISFECLFADLEINILFLKYLDAVWEVEILVDDLLLLEYLNLNTVPVEENKLRLAEIVYNIESKTPVSSCTIKSFTWVQFQNDRQYSGIATAVSDPSDFSIQLEDFFDIMKYLFMLLSDLPETLQTLPQEFIIPGSSCLFKYKSEDQWNRVEISEVSPQSLCLVLVDYGFSFYIRYSEIINLKVVPEELLNLPRLSYPCILYGILPAKGKHWSEEAKIFFRDFLSKPDLVFQFREYHSETKLKVDVIHEKNNLADILVASGLATYSKDSPHLDAITATESAKNPI</sequence>
<evidence type="ECO:0000255" key="1">
    <source>
        <dbReference type="PROSITE-ProRule" id="PRU00211"/>
    </source>
</evidence>
<evidence type="ECO:0000256" key="2">
    <source>
        <dbReference type="SAM" id="MobiDB-lite"/>
    </source>
</evidence>
<dbReference type="EMBL" id="AC010872">
    <property type="status" value="NOT_ANNOTATED_CDS"/>
    <property type="molecule type" value="Genomic_DNA"/>
</dbReference>
<dbReference type="EMBL" id="EG328743">
    <property type="status" value="NOT_ANNOTATED_CDS"/>
    <property type="molecule type" value="mRNA"/>
</dbReference>
<dbReference type="CCDS" id="CCDS77385.1"/>
<dbReference type="RefSeq" id="NP_001293066.1">
    <property type="nucleotide sequence ID" value="NM_001306137.2"/>
</dbReference>
<dbReference type="RefSeq" id="XP_011531514.1">
    <property type="nucleotide sequence ID" value="XM_011533212.2"/>
</dbReference>
<dbReference type="RefSeq" id="XP_054188977.1">
    <property type="nucleotide sequence ID" value="XM_054333002.1"/>
</dbReference>
<dbReference type="STRING" id="9606.ENSP00000384376"/>
<dbReference type="GlyGen" id="B5MCY1">
    <property type="glycosylation" value="1 site, 1 O-linked glycan (1 site)"/>
</dbReference>
<dbReference type="iPTMnet" id="B5MCY1"/>
<dbReference type="PhosphoSitePlus" id="B5MCY1"/>
<dbReference type="BioMuta" id="TDRD15"/>
<dbReference type="jPOST" id="B5MCY1"/>
<dbReference type="MassIVE" id="B5MCY1"/>
<dbReference type="PaxDb" id="9606-ENSP00000384376"/>
<dbReference type="PeptideAtlas" id="B5MCY1"/>
<dbReference type="Antibodypedia" id="64488">
    <property type="antibodies" value="9 antibodies from 5 providers"/>
</dbReference>
<dbReference type="Ensembl" id="ENST00000405799.3">
    <property type="protein sequence ID" value="ENSP00000384376.2"/>
    <property type="gene ID" value="ENSG00000218819.6"/>
</dbReference>
<dbReference type="Ensembl" id="ENST00000622654.1">
    <property type="protein sequence ID" value="ENSP00000478350.1"/>
    <property type="gene ID" value="ENSG00000218819.6"/>
</dbReference>
<dbReference type="Ensembl" id="ENST00000707967.1">
    <property type="protein sequence ID" value="ENSP00000517057.1"/>
    <property type="gene ID" value="ENSG00000291547.1"/>
</dbReference>
<dbReference type="Ensembl" id="ENST00000707968.1">
    <property type="protein sequence ID" value="ENSP00000517058.1"/>
    <property type="gene ID" value="ENSG00000291547.1"/>
</dbReference>
<dbReference type="GeneID" id="100129278"/>
<dbReference type="KEGG" id="hsa:100129278"/>
<dbReference type="MANE-Select" id="ENST00000405799.3">
    <property type="protein sequence ID" value="ENSP00000384376.2"/>
    <property type="RefSeq nucleotide sequence ID" value="NM_001306137.2"/>
    <property type="RefSeq protein sequence ID" value="NP_001293066.1"/>
</dbReference>
<dbReference type="UCSC" id="uc061gzs.1">
    <property type="organism name" value="human"/>
</dbReference>
<dbReference type="AGR" id="HGNC:45037"/>
<dbReference type="CTD" id="100129278"/>
<dbReference type="DisGeNET" id="100129278"/>
<dbReference type="GeneCards" id="TDRD15"/>
<dbReference type="HGNC" id="HGNC:45037">
    <property type="gene designation" value="TDRD15"/>
</dbReference>
<dbReference type="HPA" id="ENSG00000218819">
    <property type="expression patterns" value="Tissue enriched (testis)"/>
</dbReference>
<dbReference type="neXtProt" id="NX_B5MCY1"/>
<dbReference type="OpenTargets" id="ENSG00000218819"/>
<dbReference type="VEuPathDB" id="HostDB:ENSG00000218819"/>
<dbReference type="eggNOG" id="KOG2039">
    <property type="taxonomic scope" value="Eukaryota"/>
</dbReference>
<dbReference type="GeneTree" id="ENSGT00940000162581"/>
<dbReference type="HOGENOM" id="CLU_001126_2_0_1"/>
<dbReference type="InParanoid" id="B5MCY1"/>
<dbReference type="OMA" id="NMSFECL"/>
<dbReference type="OrthoDB" id="9995375at2759"/>
<dbReference type="PAN-GO" id="B5MCY1">
    <property type="GO annotations" value="3 GO annotations based on evolutionary models"/>
</dbReference>
<dbReference type="PhylomeDB" id="B5MCY1"/>
<dbReference type="PathwayCommons" id="B5MCY1"/>
<dbReference type="SignaLink" id="B5MCY1"/>
<dbReference type="BioGRID-ORCS" id="100129278">
    <property type="hits" value="0 hits in 163 CRISPR screens"/>
</dbReference>
<dbReference type="GenomeRNAi" id="100129278"/>
<dbReference type="Pharos" id="B5MCY1">
    <property type="development level" value="Tdark"/>
</dbReference>
<dbReference type="PRO" id="PR:B5MCY1"/>
<dbReference type="Proteomes" id="UP000005640">
    <property type="component" value="Chromosome 2"/>
</dbReference>
<dbReference type="RNAct" id="B5MCY1">
    <property type="molecule type" value="protein"/>
</dbReference>
<dbReference type="Bgee" id="ENSG00000218819">
    <property type="expression patterns" value="Expressed in male germ line stem cell (sensu Vertebrata) in testis and 10 other cell types or tissues"/>
</dbReference>
<dbReference type="CDD" id="cd20436">
    <property type="entry name" value="Tudor_TDRD15_rpt1"/>
    <property type="match status" value="1"/>
</dbReference>
<dbReference type="CDD" id="cd20437">
    <property type="entry name" value="Tudor_TDRD15_rpt2"/>
    <property type="match status" value="1"/>
</dbReference>
<dbReference type="CDD" id="cd20438">
    <property type="entry name" value="Tudor_TDRD15_rpt3"/>
    <property type="match status" value="1"/>
</dbReference>
<dbReference type="CDD" id="cd20439">
    <property type="entry name" value="Tudor_TDRD15_rpt4"/>
    <property type="match status" value="1"/>
</dbReference>
<dbReference type="CDD" id="cd20440">
    <property type="entry name" value="Tudor_TDRD15_rpt5"/>
    <property type="match status" value="1"/>
</dbReference>
<dbReference type="CDD" id="cd20441">
    <property type="entry name" value="Tudor_TDRD15_rpt6"/>
    <property type="match status" value="1"/>
</dbReference>
<dbReference type="CDD" id="cd20442">
    <property type="entry name" value="Tudor_TDRD15_rpt7"/>
    <property type="match status" value="1"/>
</dbReference>
<dbReference type="FunFam" id="2.30.30.140:FF:000018">
    <property type="entry name" value="Serine/threonine-protein kinase 31"/>
    <property type="match status" value="1"/>
</dbReference>
<dbReference type="Gene3D" id="2.30.30.140">
    <property type="match status" value="7"/>
</dbReference>
<dbReference type="Gene3D" id="2.40.50.90">
    <property type="match status" value="6"/>
</dbReference>
<dbReference type="InterPro" id="IPR035437">
    <property type="entry name" value="SNase_OB-fold_sf"/>
</dbReference>
<dbReference type="InterPro" id="IPR002999">
    <property type="entry name" value="Tudor"/>
</dbReference>
<dbReference type="InterPro" id="IPR050621">
    <property type="entry name" value="Tudor_domain_containing"/>
</dbReference>
<dbReference type="InterPro" id="IPR047450">
    <property type="entry name" value="Tudor_TDRD15_rpt1"/>
</dbReference>
<dbReference type="InterPro" id="IPR047452">
    <property type="entry name" value="Tudor_TDRD15_rpt2"/>
</dbReference>
<dbReference type="InterPro" id="IPR047454">
    <property type="entry name" value="Tudor_TDRD15_rpt3"/>
</dbReference>
<dbReference type="InterPro" id="IPR047455">
    <property type="entry name" value="Tudor_TDRD15_rpt4"/>
</dbReference>
<dbReference type="InterPro" id="IPR047460">
    <property type="entry name" value="Tudor_TDRD15_rpt5"/>
</dbReference>
<dbReference type="InterPro" id="IPR047459">
    <property type="entry name" value="Tudor_TDRD15_rpt6"/>
</dbReference>
<dbReference type="InterPro" id="IPR047457">
    <property type="entry name" value="Tudor_TDRD15_rpt7"/>
</dbReference>
<dbReference type="PANTHER" id="PTHR22948:SF29">
    <property type="entry name" value="FI02030P-RELATED"/>
    <property type="match status" value="1"/>
</dbReference>
<dbReference type="PANTHER" id="PTHR22948">
    <property type="entry name" value="TUDOR DOMAIN CONTAINING PROTEIN"/>
    <property type="match status" value="1"/>
</dbReference>
<dbReference type="Pfam" id="PF00567">
    <property type="entry name" value="TUDOR"/>
    <property type="match status" value="7"/>
</dbReference>
<dbReference type="SMART" id="SM00333">
    <property type="entry name" value="TUDOR"/>
    <property type="match status" value="8"/>
</dbReference>
<dbReference type="SUPFAM" id="SSF50199">
    <property type="entry name" value="Staphylococcal nuclease"/>
    <property type="match status" value="1"/>
</dbReference>
<dbReference type="SUPFAM" id="SSF63748">
    <property type="entry name" value="Tudor/PWWP/MBT"/>
    <property type="match status" value="8"/>
</dbReference>
<dbReference type="PROSITE" id="PS50304">
    <property type="entry name" value="TUDOR"/>
    <property type="match status" value="6"/>
</dbReference>
<gene>
    <name type="primary">TDRD15</name>
</gene>
<accession>B5MCY1</accession>
<organism>
    <name type="scientific">Homo sapiens</name>
    <name type="common">Human</name>
    <dbReference type="NCBI Taxonomy" id="9606"/>
    <lineage>
        <taxon>Eukaryota</taxon>
        <taxon>Metazoa</taxon>
        <taxon>Chordata</taxon>
        <taxon>Craniata</taxon>
        <taxon>Vertebrata</taxon>
        <taxon>Euteleostomi</taxon>
        <taxon>Mammalia</taxon>
        <taxon>Eutheria</taxon>
        <taxon>Euarchontoglires</taxon>
        <taxon>Primates</taxon>
        <taxon>Haplorrhini</taxon>
        <taxon>Catarrhini</taxon>
        <taxon>Hominidae</taxon>
        <taxon>Homo</taxon>
    </lineage>
</organism>
<reference key="1">
    <citation type="journal article" date="2005" name="Nature">
        <title>Generation and annotation of the DNA sequences of human chromosomes 2 and 4.</title>
        <authorList>
            <person name="Hillier L.W."/>
            <person name="Graves T.A."/>
            <person name="Fulton R.S."/>
            <person name="Fulton L.A."/>
            <person name="Pepin K.H."/>
            <person name="Minx P."/>
            <person name="Wagner-McPherson C."/>
            <person name="Layman D."/>
            <person name="Wylie K."/>
            <person name="Sekhon M."/>
            <person name="Becker M.C."/>
            <person name="Fewell G.A."/>
            <person name="Delehaunty K.D."/>
            <person name="Miner T.L."/>
            <person name="Nash W.E."/>
            <person name="Kremitzki C."/>
            <person name="Oddy L."/>
            <person name="Du H."/>
            <person name="Sun H."/>
            <person name="Bradshaw-Cordum H."/>
            <person name="Ali J."/>
            <person name="Carter J."/>
            <person name="Cordes M."/>
            <person name="Harris A."/>
            <person name="Isak A."/>
            <person name="van Brunt A."/>
            <person name="Nguyen C."/>
            <person name="Du F."/>
            <person name="Courtney L."/>
            <person name="Kalicki J."/>
            <person name="Ozersky P."/>
            <person name="Abbott S."/>
            <person name="Armstrong J."/>
            <person name="Belter E.A."/>
            <person name="Caruso L."/>
            <person name="Cedroni M."/>
            <person name="Cotton M."/>
            <person name="Davidson T."/>
            <person name="Desai A."/>
            <person name="Elliott G."/>
            <person name="Erb T."/>
            <person name="Fronick C."/>
            <person name="Gaige T."/>
            <person name="Haakenson W."/>
            <person name="Haglund K."/>
            <person name="Holmes A."/>
            <person name="Harkins R."/>
            <person name="Kim K."/>
            <person name="Kruchowski S.S."/>
            <person name="Strong C.M."/>
            <person name="Grewal N."/>
            <person name="Goyea E."/>
            <person name="Hou S."/>
            <person name="Levy A."/>
            <person name="Martinka S."/>
            <person name="Mead K."/>
            <person name="McLellan M.D."/>
            <person name="Meyer R."/>
            <person name="Randall-Maher J."/>
            <person name="Tomlinson C."/>
            <person name="Dauphin-Kohlberg S."/>
            <person name="Kozlowicz-Reilly A."/>
            <person name="Shah N."/>
            <person name="Swearengen-Shahid S."/>
            <person name="Snider J."/>
            <person name="Strong J.T."/>
            <person name="Thompson J."/>
            <person name="Yoakum M."/>
            <person name="Leonard S."/>
            <person name="Pearman C."/>
            <person name="Trani L."/>
            <person name="Radionenko M."/>
            <person name="Waligorski J.E."/>
            <person name="Wang C."/>
            <person name="Rock S.M."/>
            <person name="Tin-Wollam A.-M."/>
            <person name="Maupin R."/>
            <person name="Latreille P."/>
            <person name="Wendl M.C."/>
            <person name="Yang S.-P."/>
            <person name="Pohl C."/>
            <person name="Wallis J.W."/>
            <person name="Spieth J."/>
            <person name="Bieri T.A."/>
            <person name="Berkowicz N."/>
            <person name="Nelson J.O."/>
            <person name="Osborne J."/>
            <person name="Ding L."/>
            <person name="Meyer R."/>
            <person name="Sabo A."/>
            <person name="Shotland Y."/>
            <person name="Sinha P."/>
            <person name="Wohldmann P.E."/>
            <person name="Cook L.L."/>
            <person name="Hickenbotham M.T."/>
            <person name="Eldred J."/>
            <person name="Williams D."/>
            <person name="Jones T.A."/>
            <person name="She X."/>
            <person name="Ciccarelli F.D."/>
            <person name="Izaurralde E."/>
            <person name="Taylor J."/>
            <person name="Schmutz J."/>
            <person name="Myers R.M."/>
            <person name="Cox D.R."/>
            <person name="Huang X."/>
            <person name="McPherson J.D."/>
            <person name="Mardis E.R."/>
            <person name="Clifton S.W."/>
            <person name="Warren W.C."/>
            <person name="Chinwalla A.T."/>
            <person name="Eddy S.R."/>
            <person name="Marra M.A."/>
            <person name="Ovcharenko I."/>
            <person name="Furey T.S."/>
            <person name="Miller W."/>
            <person name="Eichler E.E."/>
            <person name="Bork P."/>
            <person name="Suyama M."/>
            <person name="Torrents D."/>
            <person name="Waterston R.H."/>
            <person name="Wilson R.K."/>
        </authorList>
    </citation>
    <scope>NUCLEOTIDE SEQUENCE [LARGE SCALE GENOMIC DNA]</scope>
</reference>
<reference key="2">
    <citation type="submission" date="2011-01" db="EMBL/GenBank/DDBJ databases">
        <title>Exhaustive RT-PCR and sequencing of all novel TWINSCAN predictions in human.</title>
        <authorList>
            <person name="Stevens M."/>
            <person name="Wei C."/>
            <person name="Gross S.S."/>
            <person name="McPherson J."/>
            <person name="Brent M.R."/>
        </authorList>
    </citation>
    <scope>NUCLEOTIDE SEQUENCE [LARGE SCALE MRNA] OF 1-105</scope>
</reference>
<feature type="chain" id="PRO_0000421965" description="Tudor domain-containing protein 15">
    <location>
        <begin position="1"/>
        <end position="1934"/>
    </location>
</feature>
<feature type="domain" description="Tudor 1" evidence="1">
    <location>
        <begin position="59"/>
        <end position="117"/>
    </location>
</feature>
<feature type="domain" description="Tudor 2" evidence="1">
    <location>
        <begin position="289"/>
        <end position="347"/>
    </location>
</feature>
<feature type="domain" description="Tudor 3" evidence="1">
    <location>
        <begin position="531"/>
        <end position="589"/>
    </location>
</feature>
<feature type="domain" description="Tudor 4" evidence="1">
    <location>
        <begin position="799"/>
        <end position="856"/>
    </location>
</feature>
<feature type="domain" description="Tudor 5" evidence="1">
    <location>
        <begin position="1011"/>
        <end position="1070"/>
    </location>
</feature>
<feature type="domain" description="Tudor 6" evidence="1">
    <location>
        <begin position="1342"/>
        <end position="1401"/>
    </location>
</feature>
<feature type="domain" description="Tudor 7" evidence="1">
    <location>
        <begin position="1574"/>
        <end position="1633"/>
    </location>
</feature>
<feature type="domain" description="Tudor 8" evidence="1">
    <location>
        <begin position="1780"/>
        <end position="1838"/>
    </location>
</feature>
<feature type="region of interest" description="Disordered" evidence="2">
    <location>
        <begin position="1490"/>
        <end position="1510"/>
    </location>
</feature>
<feature type="compositionally biased region" description="Basic and acidic residues" evidence="2">
    <location>
        <begin position="1491"/>
        <end position="1504"/>
    </location>
</feature>
<protein>
    <recommendedName>
        <fullName>Tudor domain-containing protein 15</fullName>
    </recommendedName>
</protein>
<keyword id="KW-1267">Proteomics identification</keyword>
<keyword id="KW-1185">Reference proteome</keyword>
<keyword id="KW-0677">Repeat</keyword>
<proteinExistence type="evidence at protein level"/>
<name>TDR15_HUMAN</name>